<keyword id="KW-0067">ATP-binding</keyword>
<keyword id="KW-0175">Coiled coil</keyword>
<keyword id="KW-0233">DNA recombination</keyword>
<keyword id="KW-0235">DNA replication</keyword>
<keyword id="KW-0255">Endonuclease</keyword>
<keyword id="KW-0269">Exonuclease</keyword>
<keyword id="KW-0378">Hydrolase</keyword>
<keyword id="KW-0540">Nuclease</keyword>
<keyword id="KW-0547">Nucleotide-binding</keyword>
<reference key="1">
    <citation type="journal article" date="2004" name="Proc. Natl. Acad. Sci. U.S.A.">
        <title>Complete genomes of two clinical Staphylococcus aureus strains: evidence for the rapid evolution of virulence and drug resistance.</title>
        <authorList>
            <person name="Holden M.T.G."/>
            <person name="Feil E.J."/>
            <person name="Lindsay J.A."/>
            <person name="Peacock S.J."/>
            <person name="Day N.P.J."/>
            <person name="Enright M.C."/>
            <person name="Foster T.J."/>
            <person name="Moore C.E."/>
            <person name="Hurst L."/>
            <person name="Atkin R."/>
            <person name="Barron A."/>
            <person name="Bason N."/>
            <person name="Bentley S.D."/>
            <person name="Chillingworth C."/>
            <person name="Chillingworth T."/>
            <person name="Churcher C."/>
            <person name="Clark L."/>
            <person name="Corton C."/>
            <person name="Cronin A."/>
            <person name="Doggett J."/>
            <person name="Dowd L."/>
            <person name="Feltwell T."/>
            <person name="Hance Z."/>
            <person name="Harris B."/>
            <person name="Hauser H."/>
            <person name="Holroyd S."/>
            <person name="Jagels K."/>
            <person name="James K.D."/>
            <person name="Lennard N."/>
            <person name="Line A."/>
            <person name="Mayes R."/>
            <person name="Moule S."/>
            <person name="Mungall K."/>
            <person name="Ormond D."/>
            <person name="Quail M.A."/>
            <person name="Rabbinowitsch E."/>
            <person name="Rutherford K.M."/>
            <person name="Sanders M."/>
            <person name="Sharp S."/>
            <person name="Simmonds M."/>
            <person name="Stevens K."/>
            <person name="Whitehead S."/>
            <person name="Barrell B.G."/>
            <person name="Spratt B.G."/>
            <person name="Parkhill J."/>
        </authorList>
    </citation>
    <scope>NUCLEOTIDE SEQUENCE [LARGE SCALE GENOMIC DNA]</scope>
    <source>
        <strain>MRSA252</strain>
    </source>
</reference>
<dbReference type="EMBL" id="BX571856">
    <property type="protein sequence ID" value="CAG40355.1"/>
    <property type="molecule type" value="Genomic_DNA"/>
</dbReference>
<dbReference type="RefSeq" id="WP_000803176.1">
    <property type="nucleotide sequence ID" value="NC_002952.2"/>
</dbReference>
<dbReference type="SMR" id="Q6GH60"/>
<dbReference type="KEGG" id="sar:SAR1357"/>
<dbReference type="HOGENOM" id="CLU_004785_2_1_9"/>
<dbReference type="Proteomes" id="UP000000596">
    <property type="component" value="Chromosome"/>
</dbReference>
<dbReference type="GO" id="GO:0005524">
    <property type="term" value="F:ATP binding"/>
    <property type="evidence" value="ECO:0007669"/>
    <property type="project" value="UniProtKB-KW"/>
</dbReference>
<dbReference type="GO" id="GO:0016887">
    <property type="term" value="F:ATP hydrolysis activity"/>
    <property type="evidence" value="ECO:0007669"/>
    <property type="project" value="InterPro"/>
</dbReference>
<dbReference type="GO" id="GO:0004519">
    <property type="term" value="F:endonuclease activity"/>
    <property type="evidence" value="ECO:0007669"/>
    <property type="project" value="UniProtKB-KW"/>
</dbReference>
<dbReference type="GO" id="GO:0004527">
    <property type="term" value="F:exonuclease activity"/>
    <property type="evidence" value="ECO:0007669"/>
    <property type="project" value="UniProtKB-KW"/>
</dbReference>
<dbReference type="GO" id="GO:0006310">
    <property type="term" value="P:DNA recombination"/>
    <property type="evidence" value="ECO:0007669"/>
    <property type="project" value="UniProtKB-KW"/>
</dbReference>
<dbReference type="GO" id="GO:0006260">
    <property type="term" value="P:DNA replication"/>
    <property type="evidence" value="ECO:0007669"/>
    <property type="project" value="UniProtKB-KW"/>
</dbReference>
<dbReference type="GO" id="GO:0006302">
    <property type="term" value="P:double-strand break repair"/>
    <property type="evidence" value="ECO:0007669"/>
    <property type="project" value="InterPro"/>
</dbReference>
<dbReference type="CDD" id="cd03279">
    <property type="entry name" value="ABC_sbcCD"/>
    <property type="match status" value="1"/>
</dbReference>
<dbReference type="Gene3D" id="3.40.50.300">
    <property type="entry name" value="P-loop containing nucleotide triphosphate hydrolases"/>
    <property type="match status" value="2"/>
</dbReference>
<dbReference type="InterPro" id="IPR027417">
    <property type="entry name" value="P-loop_NTPase"/>
</dbReference>
<dbReference type="InterPro" id="IPR038729">
    <property type="entry name" value="Rad50/SbcC_AAA"/>
</dbReference>
<dbReference type="InterPro" id="IPR053380">
    <property type="entry name" value="SbcCD_Nuclease_C"/>
</dbReference>
<dbReference type="NCBIfam" id="NF041751">
    <property type="entry name" value="sbcc_Staph"/>
    <property type="match status" value="1"/>
</dbReference>
<dbReference type="PANTHER" id="PTHR32114">
    <property type="entry name" value="ABC TRANSPORTER ABCH.3"/>
    <property type="match status" value="1"/>
</dbReference>
<dbReference type="PANTHER" id="PTHR32114:SF2">
    <property type="entry name" value="ABC TRANSPORTER ABCH.3"/>
    <property type="match status" value="1"/>
</dbReference>
<dbReference type="Pfam" id="PF13476">
    <property type="entry name" value="AAA_23"/>
    <property type="match status" value="1"/>
</dbReference>
<dbReference type="Pfam" id="PF13558">
    <property type="entry name" value="SbcC_Walker_B"/>
    <property type="match status" value="1"/>
</dbReference>
<dbReference type="SUPFAM" id="SSF52540">
    <property type="entry name" value="P-loop containing nucleoside triphosphate hydrolases"/>
    <property type="match status" value="1"/>
</dbReference>
<dbReference type="SUPFAM" id="SSF75712">
    <property type="entry name" value="Rad50 coiled-coil Zn hook"/>
    <property type="match status" value="1"/>
</dbReference>
<protein>
    <recommendedName>
        <fullName>Nuclease SbcCD subunit C</fullName>
    </recommendedName>
</protein>
<gene>
    <name type="primary">sbcC</name>
    <name type="ordered locus">SAR1357</name>
</gene>
<comment type="function">
    <text evidence="1">SbcCD cleaves DNA hairpin structures. These structures can inhibit DNA replication and are intermediates in certain DNA recombination reactions. The complex acts as a 3'-&gt;5' double strand exonuclease that can open hairpins. It also has a 5' single-strand endonuclease activity (By similarity).</text>
</comment>
<comment type="subunit">
    <text evidence="1">Heterodimer of SbcC and SbcD.</text>
</comment>
<comment type="similarity">
    <text evidence="3">Belongs to the SMC family. SbcC subfamily.</text>
</comment>
<accession>Q6GH60</accession>
<organism>
    <name type="scientific">Staphylococcus aureus (strain MRSA252)</name>
    <dbReference type="NCBI Taxonomy" id="282458"/>
    <lineage>
        <taxon>Bacteria</taxon>
        <taxon>Bacillati</taxon>
        <taxon>Bacillota</taxon>
        <taxon>Bacilli</taxon>
        <taxon>Bacillales</taxon>
        <taxon>Staphylococcaceae</taxon>
        <taxon>Staphylococcus</taxon>
    </lineage>
</organism>
<name>SBCC_STAAR</name>
<sequence length="1009" mass="117508">MKPLHLKLNNFGPFLKEEIDFSKIDNNELFLISGKTGSGKTMIFDAMTYALFGKASTEQREENDLRSHFADGKQPMSVTFEFQLNNRIYKVHRQGPYIKEGNTTKTNAKFDVFEMVDGKYEIRESKVISGTQFIIELLGVNADQFRQLFILPQGEFKRFLISNSREKQGILRTLFDSEKFEAIREILKEEVKKENAQIENRYQQIDLLWQEIESFDDDKIKGLLEVATQQIDKVIENIPLLQARSKEILAFVNESKETAIKDYEIIEKKTLENNILKDNINQLNKNKIDFVQLKEQQPEIEEIEAKLKLLQDITNLLNYIENREKIETKIANSKKDISETNNKILNLECDKRNIDKEKRMLEENGDLIESKISFIDKTRVLFNDINKYQQSYLNIERLRTEGEQLADELNNLIEGLEKVEDSIGNNESDYEKIIELNNAITNINNEINVIKENEKAKAELDKLLGSKQELENQINEETSTLKNLEIKLDRYDKSKLDLNDKESFISEIKSAVKIGDQCPICGNEIQDLGHHIDFDSIAKRQNEIKEIEANIHTMKSNIAVHNSEIKFVNEKISNINIKTQSDFSLEVLNKRLLENENALNNQRELNKFIEQMKEEKDNLTLQIHNKQLRLNKNESELKLCRNLITEFETLSKYNNITNFEVDYKKYVQDVNQHQEHSNQIEDKLIQLSQRKLIEQNNLNHYEKQLETYNNDLELNEQSIEMEMSRLNLTDNNDINEIIAWRGEQEELEQKRDTYKKRYHEFEMEIARLESLTKDKELLDSDKLKDEYELKKGKMNTLIDEYSAVHYQCQNNINKTQSIVSHINYLNQELKDQQEIFQLAEIVSGKNNKNLTLENFVLIYYLDQIIAQANLRLATMSDNRYQLIRREAVSHGLSGLEIDVFDLHSNKSRHISSLSGGETFQSSLALALGLSEIVQQQSGGISLESIFIDEGFGTLDQETLETALDTLLNLKSTGRMVGIISHVSELKNRIPLVLEVKSDQYQSSTRFKRN</sequence>
<proteinExistence type="inferred from homology"/>
<feature type="chain" id="PRO_0000338464" description="Nuclease SbcCD subunit C">
    <location>
        <begin position="1"/>
        <end position="1009"/>
    </location>
</feature>
<feature type="coiled-coil region" evidence="2">
    <location>
        <begin position="176"/>
        <end position="208"/>
    </location>
</feature>
<feature type="coiled-coil region" evidence="2">
    <location>
        <begin position="264"/>
        <end position="366"/>
    </location>
</feature>
<feature type="coiled-coil region" evidence="2">
    <location>
        <begin position="392"/>
        <end position="501"/>
    </location>
</feature>
<feature type="coiled-coil region" evidence="2">
    <location>
        <begin position="535"/>
        <end position="638"/>
    </location>
</feature>
<feature type="coiled-coil region" evidence="2">
    <location>
        <begin position="664"/>
        <end position="802"/>
    </location>
</feature>
<feature type="binding site" evidence="2">
    <location>
        <begin position="34"/>
        <end position="41"/>
    </location>
    <ligand>
        <name>ATP</name>
        <dbReference type="ChEBI" id="CHEBI:30616"/>
    </ligand>
</feature>
<evidence type="ECO:0000250" key="1"/>
<evidence type="ECO:0000255" key="2"/>
<evidence type="ECO:0000305" key="3"/>